<protein>
    <recommendedName>
        <fullName>Chaperone protein DnaK</fullName>
    </recommendedName>
    <alternativeName>
        <fullName>HSP70</fullName>
    </alternativeName>
    <alternativeName>
        <fullName>Heat shock 70 kDa protein</fullName>
    </alternativeName>
    <alternativeName>
        <fullName>Heat shock protein 70</fullName>
    </alternativeName>
</protein>
<name>DNAK_BORBU</name>
<dbReference type="EMBL" id="M96847">
    <property type="protein sequence ID" value="AAA22947.1"/>
    <property type="molecule type" value="Genomic_DNA"/>
</dbReference>
<dbReference type="EMBL" id="M97912">
    <property type="protein sequence ID" value="AAA22949.1"/>
    <property type="molecule type" value="Genomic_DNA"/>
</dbReference>
<dbReference type="EMBL" id="S42385">
    <property type="protein sequence ID" value="AAB22886.1"/>
    <property type="molecule type" value="Genomic_DNA"/>
</dbReference>
<dbReference type="EMBL" id="AE000783">
    <property type="protein sequence ID" value="AAC66887.1"/>
    <property type="molecule type" value="Genomic_DNA"/>
</dbReference>
<dbReference type="PIR" id="E70164">
    <property type="entry name" value="E70164"/>
</dbReference>
<dbReference type="RefSeq" id="NP_212652.1">
    <property type="nucleotide sequence ID" value="NC_001318.1"/>
</dbReference>
<dbReference type="RefSeq" id="WP_002557108.1">
    <property type="nucleotide sequence ID" value="NC_001318.1"/>
</dbReference>
<dbReference type="SMR" id="P0C922"/>
<dbReference type="STRING" id="224326.BB_0518"/>
<dbReference type="PaxDb" id="224326-BB_0518"/>
<dbReference type="EnsemblBacteria" id="AAC66887">
    <property type="protein sequence ID" value="AAC66887"/>
    <property type="gene ID" value="BB_0518"/>
</dbReference>
<dbReference type="GeneID" id="56567952"/>
<dbReference type="KEGG" id="bbu:BB_0518"/>
<dbReference type="PATRIC" id="fig|224326.49.peg.909"/>
<dbReference type="HOGENOM" id="CLU_005965_2_4_12"/>
<dbReference type="OrthoDB" id="9766019at2"/>
<dbReference type="Proteomes" id="UP000001807">
    <property type="component" value="Chromosome"/>
</dbReference>
<dbReference type="GO" id="GO:0005829">
    <property type="term" value="C:cytosol"/>
    <property type="evidence" value="ECO:0000314"/>
    <property type="project" value="CAFA"/>
</dbReference>
<dbReference type="GO" id="GO:0005524">
    <property type="term" value="F:ATP binding"/>
    <property type="evidence" value="ECO:0007669"/>
    <property type="project" value="UniProtKB-UniRule"/>
</dbReference>
<dbReference type="GO" id="GO:0140662">
    <property type="term" value="F:ATP-dependent protein folding chaperone"/>
    <property type="evidence" value="ECO:0007669"/>
    <property type="project" value="InterPro"/>
</dbReference>
<dbReference type="GO" id="GO:0051082">
    <property type="term" value="F:unfolded protein binding"/>
    <property type="evidence" value="ECO:0007669"/>
    <property type="project" value="InterPro"/>
</dbReference>
<dbReference type="CDD" id="cd10234">
    <property type="entry name" value="ASKHA_NBD_HSP70_DnaK-like"/>
    <property type="match status" value="1"/>
</dbReference>
<dbReference type="FunFam" id="2.60.34.10:FF:000014">
    <property type="entry name" value="Chaperone protein DnaK HSP70"/>
    <property type="match status" value="1"/>
</dbReference>
<dbReference type="FunFam" id="3.30.420.40:FF:000020">
    <property type="entry name" value="Chaperone protein HscA homolog"/>
    <property type="match status" value="1"/>
</dbReference>
<dbReference type="FunFam" id="1.20.1270.10:FF:000001">
    <property type="entry name" value="Molecular chaperone DnaK"/>
    <property type="match status" value="1"/>
</dbReference>
<dbReference type="FunFam" id="3.30.420.40:FF:000004">
    <property type="entry name" value="Molecular chaperone DnaK"/>
    <property type="match status" value="1"/>
</dbReference>
<dbReference type="FunFam" id="3.90.640.10:FF:000003">
    <property type="entry name" value="Molecular chaperone DnaK"/>
    <property type="match status" value="1"/>
</dbReference>
<dbReference type="Gene3D" id="1.20.1270.10">
    <property type="match status" value="1"/>
</dbReference>
<dbReference type="Gene3D" id="3.30.420.40">
    <property type="match status" value="2"/>
</dbReference>
<dbReference type="Gene3D" id="3.90.640.10">
    <property type="entry name" value="Actin, Chain A, domain 4"/>
    <property type="match status" value="1"/>
</dbReference>
<dbReference type="Gene3D" id="2.60.34.10">
    <property type="entry name" value="Substrate Binding Domain Of DNAk, Chain A, domain 1"/>
    <property type="match status" value="1"/>
</dbReference>
<dbReference type="HAMAP" id="MF_00332">
    <property type="entry name" value="DnaK"/>
    <property type="match status" value="1"/>
</dbReference>
<dbReference type="InterPro" id="IPR043129">
    <property type="entry name" value="ATPase_NBD"/>
</dbReference>
<dbReference type="InterPro" id="IPR012725">
    <property type="entry name" value="Chaperone_DnaK"/>
</dbReference>
<dbReference type="InterPro" id="IPR018181">
    <property type="entry name" value="Heat_shock_70_CS"/>
</dbReference>
<dbReference type="InterPro" id="IPR029048">
    <property type="entry name" value="HSP70_C_sf"/>
</dbReference>
<dbReference type="InterPro" id="IPR029047">
    <property type="entry name" value="HSP70_peptide-bd_sf"/>
</dbReference>
<dbReference type="InterPro" id="IPR013126">
    <property type="entry name" value="Hsp_70_fam"/>
</dbReference>
<dbReference type="NCBIfam" id="NF001413">
    <property type="entry name" value="PRK00290.1"/>
    <property type="match status" value="1"/>
</dbReference>
<dbReference type="NCBIfam" id="NF003520">
    <property type="entry name" value="PRK05183.1"/>
    <property type="match status" value="1"/>
</dbReference>
<dbReference type="NCBIfam" id="TIGR02350">
    <property type="entry name" value="prok_dnaK"/>
    <property type="match status" value="1"/>
</dbReference>
<dbReference type="PANTHER" id="PTHR19375">
    <property type="entry name" value="HEAT SHOCK PROTEIN 70KDA"/>
    <property type="match status" value="1"/>
</dbReference>
<dbReference type="Pfam" id="PF00012">
    <property type="entry name" value="HSP70"/>
    <property type="match status" value="1"/>
</dbReference>
<dbReference type="PRINTS" id="PR00301">
    <property type="entry name" value="HEATSHOCK70"/>
</dbReference>
<dbReference type="SUPFAM" id="SSF53067">
    <property type="entry name" value="Actin-like ATPase domain"/>
    <property type="match status" value="2"/>
</dbReference>
<dbReference type="SUPFAM" id="SSF100934">
    <property type="entry name" value="Heat shock protein 70kD (HSP70), C-terminal subdomain"/>
    <property type="match status" value="1"/>
</dbReference>
<dbReference type="SUPFAM" id="SSF100920">
    <property type="entry name" value="Heat shock protein 70kD (HSP70), peptide-binding domain"/>
    <property type="match status" value="1"/>
</dbReference>
<dbReference type="PROSITE" id="PS00297">
    <property type="entry name" value="HSP70_1"/>
    <property type="match status" value="1"/>
</dbReference>
<dbReference type="PROSITE" id="PS00329">
    <property type="entry name" value="HSP70_2"/>
    <property type="match status" value="1"/>
</dbReference>
<dbReference type="PROSITE" id="PS01036">
    <property type="entry name" value="HSP70_3"/>
    <property type="match status" value="1"/>
</dbReference>
<evidence type="ECO:0000250" key="1"/>
<evidence type="ECO:0000256" key="2">
    <source>
        <dbReference type="SAM" id="MobiDB-lite"/>
    </source>
</evidence>
<evidence type="ECO:0000305" key="3"/>
<proteinExistence type="evidence at transcript level"/>
<gene>
    <name type="primary">dnaK</name>
    <name type="ordered locus">BB_0518</name>
</gene>
<comment type="function">
    <text evidence="1">Acts as a chaperone.</text>
</comment>
<comment type="induction">
    <text>By heat shock.</text>
</comment>
<comment type="similarity">
    <text evidence="3">Belongs to the heat shock protein 70 family.</text>
</comment>
<organism>
    <name type="scientific">Borreliella burgdorferi (strain ATCC 35210 / DSM 4680 / CIP 102532 / B31)</name>
    <name type="common">Borrelia burgdorferi</name>
    <dbReference type="NCBI Taxonomy" id="224326"/>
    <lineage>
        <taxon>Bacteria</taxon>
        <taxon>Pseudomonadati</taxon>
        <taxon>Spirochaetota</taxon>
        <taxon>Spirochaetia</taxon>
        <taxon>Spirochaetales</taxon>
        <taxon>Borreliaceae</taxon>
        <taxon>Borreliella</taxon>
    </lineage>
</organism>
<feature type="chain" id="PRO_0000078425" description="Chaperone protein DnaK">
    <location>
        <begin position="1"/>
        <end position="635"/>
    </location>
</feature>
<feature type="region of interest" description="Disordered" evidence="2">
    <location>
        <begin position="597"/>
        <end position="635"/>
    </location>
</feature>
<feature type="compositionally biased region" description="Low complexity" evidence="2">
    <location>
        <begin position="601"/>
        <end position="612"/>
    </location>
</feature>
<feature type="compositionally biased region" description="Basic and acidic residues" evidence="2">
    <location>
        <begin position="620"/>
        <end position="635"/>
    </location>
</feature>
<feature type="modified residue" description="Phosphothreonine; by autocatalysis" evidence="1">
    <location>
        <position position="198"/>
    </location>
</feature>
<reference key="1">
    <citation type="journal article" date="1992" name="Infect. Immun.">
        <title>Borrelia burgdorferi HSP70 homolog: characterization of an immunoreactive stress protein.</title>
        <authorList>
            <person name="Anzola J."/>
            <person name="Luft B.J."/>
            <person name="Gorgone G."/>
            <person name="Dattwyler R.J."/>
            <person name="Soderberg C."/>
            <person name="Lahesmaa R."/>
            <person name="Peltz G."/>
        </authorList>
    </citation>
    <scope>NUCLEOTIDE SEQUENCE [GENOMIC DNA]</scope>
    <source>
        <strain>Isolate CA12</strain>
    </source>
</reference>
<reference key="2">
    <citation type="journal article" date="1993" name="Mol. Microbiol.">
        <title>Isolation of dnaJ, dnaK, and grpE homologues from Borrelia burgdorferi and complementation of Escherichia coli mutants.</title>
        <authorList>
            <person name="Tilly K."/>
            <person name="Hauser R."/>
            <person name="Campbell J."/>
            <person name="Ostheimer G.J."/>
        </authorList>
    </citation>
    <scope>NUCLEOTIDE SEQUENCE [GENOMIC DNA]</scope>
</reference>
<reference key="3">
    <citation type="journal article" date="1997" name="Nature">
        <title>Genomic sequence of a Lyme disease spirochaete, Borrelia burgdorferi.</title>
        <authorList>
            <person name="Fraser C.M."/>
            <person name="Casjens S."/>
            <person name="Huang W.M."/>
            <person name="Sutton G.G."/>
            <person name="Clayton R.A."/>
            <person name="Lathigra R."/>
            <person name="White O."/>
            <person name="Ketchum K.A."/>
            <person name="Dodson R.J."/>
            <person name="Hickey E.K."/>
            <person name="Gwinn M.L."/>
            <person name="Dougherty B.A."/>
            <person name="Tomb J.-F."/>
            <person name="Fleischmann R.D."/>
            <person name="Richardson D.L."/>
            <person name="Peterson J.D."/>
            <person name="Kerlavage A.R."/>
            <person name="Quackenbush J."/>
            <person name="Salzberg S.L."/>
            <person name="Hanson M."/>
            <person name="van Vugt R."/>
            <person name="Palmer N."/>
            <person name="Adams M.D."/>
            <person name="Gocayne J.D."/>
            <person name="Weidman J.F."/>
            <person name="Utterback T.R."/>
            <person name="Watthey L."/>
            <person name="McDonald L.A."/>
            <person name="Artiach P."/>
            <person name="Bowman C."/>
            <person name="Garland S.A."/>
            <person name="Fujii C."/>
            <person name="Cotton M.D."/>
            <person name="Horst K."/>
            <person name="Roberts K.M."/>
            <person name="Hatch B."/>
            <person name="Smith H.O."/>
            <person name="Venter J.C."/>
        </authorList>
    </citation>
    <scope>NUCLEOTIDE SEQUENCE [LARGE SCALE GENOMIC DNA]</scope>
    <source>
        <strain>ATCC 35210 / DSM 4680 / CIP 102532 / B31</strain>
    </source>
</reference>
<accession>P0C922</accession>
<accession>P28608</accession>
<keyword id="KW-0067">ATP-binding</keyword>
<keyword id="KW-0143">Chaperone</keyword>
<keyword id="KW-0547">Nucleotide-binding</keyword>
<keyword id="KW-0597">Phosphoprotein</keyword>
<keyword id="KW-1185">Reference proteome</keyword>
<keyword id="KW-0346">Stress response</keyword>
<sequence>MGKIIGIDLGTTNSCVAIMEHGKPVVIQNSEGGRTTPSIVAYTNKGERLVGQVAKNQMVTNPENTIYSIKRFMGRRFEEVASEIKMVPYKIEKGLNGDARVNISNIKKQMSPPEISAATLTKMKETAEAYLGEKVTEAVITVPAYFNDAQRQATKDAGKIAGLEVKRIVNEPTAAALAYGIEKKHEEIVAVYDLGGGTFDISILELGDGVFEVKSTNGDTHLGGDNFDDEIIKHLISEFKKESAIDLSNDKMALQRLKEAAEKAKIELSGAQEASINLPFITADANGPKHLQYTLTRAKFEQMVDHLVQKTKEPCLKAIKDAGLKASDINEVILVGGSTRIPAIQKIVKDIFGQDPNKGVNPDEAVAIGAAIQGGILTGETKDMVLLDVTPLSLGIETLGGVMTKLIERNTTIPTKKSQVFSTAADNQTSVDIKVLQGEREMAAQNRILGNFILDGIPAAPRGVPQIEVSFDIDANGIVHVSAKDMGTGKEQKIRIESSSGLSESEIDRMVKDAEAHAEEDKKLKENIEAKNTANSLIYQTEKSLKEYSEKISSEDKEAIESKIKELKESLEKEDISLIKSRTEELQKASYKIAEMMYKDSSQQNANSQQENGPQSNTSEEGKEADYEVVDEDKK</sequence>